<comment type="subcellular location">
    <subcellularLocation>
        <location evidence="1">Secreted</location>
        <location evidence="1">Cell wall</location>
    </subcellularLocation>
</comment>
<organism>
    <name type="scientific">Solanum lycopersicum</name>
    <name type="common">Tomato</name>
    <name type="synonym">Lycopersicon esculentum</name>
    <dbReference type="NCBI Taxonomy" id="4081"/>
    <lineage>
        <taxon>Eukaryota</taxon>
        <taxon>Viridiplantae</taxon>
        <taxon>Streptophyta</taxon>
        <taxon>Embryophyta</taxon>
        <taxon>Tracheophyta</taxon>
        <taxon>Spermatophyta</taxon>
        <taxon>Magnoliopsida</taxon>
        <taxon>eudicotyledons</taxon>
        <taxon>Gunneridae</taxon>
        <taxon>Pentapetalae</taxon>
        <taxon>asterids</taxon>
        <taxon>lamiids</taxon>
        <taxon>Solanales</taxon>
        <taxon>Solanaceae</taxon>
        <taxon>Solanoideae</taxon>
        <taxon>Solaneae</taxon>
        <taxon>Solanum</taxon>
        <taxon>Solanum subgen. Lycopersicon</taxon>
    </lineage>
</organism>
<sequence>EVLYIPVTTDA</sequence>
<accession>P80805</accession>
<dbReference type="InParanoid" id="P80805"/>
<dbReference type="Proteomes" id="UP000004994">
    <property type="component" value="Unplaced"/>
</dbReference>
<dbReference type="GO" id="GO:0005576">
    <property type="term" value="C:extracellular region"/>
    <property type="evidence" value="ECO:0007669"/>
    <property type="project" value="UniProtKB-KW"/>
</dbReference>
<keyword id="KW-0134">Cell wall</keyword>
<keyword id="KW-0903">Direct protein sequencing</keyword>
<keyword id="KW-1185">Reference proteome</keyword>
<keyword id="KW-0964">Secreted</keyword>
<proteinExistence type="evidence at protein level"/>
<feature type="chain" id="PRO_0000079650" description="50 kDa cell wall protein">
    <location>
        <begin position="1"/>
        <end position="11" status="greater than"/>
    </location>
</feature>
<feature type="non-terminal residue" evidence="2">
    <location>
        <position position="11"/>
    </location>
</feature>
<protein>
    <recommendedName>
        <fullName>50 kDa cell wall protein</fullName>
    </recommendedName>
</protein>
<evidence type="ECO:0000269" key="1">
    <source>
    </source>
</evidence>
<evidence type="ECO:0000303" key="2">
    <source>
    </source>
</evidence>
<evidence type="ECO:0000305" key="3"/>
<name>CWP08_SOLLC</name>
<reference evidence="3" key="1">
    <citation type="journal article" date="1997" name="J. Biol. Chem.">
        <title>Differential extraction and protein sequencing reveals major differences in patterns of primary cell wall proteins from plants.</title>
        <authorList>
            <person name="Robertson D."/>
            <person name="Mitchell G.P."/>
            <person name="Gilroy J.S."/>
            <person name="Gerrish C."/>
            <person name="Bolwell G.P."/>
            <person name="Slabas A.R."/>
        </authorList>
    </citation>
    <scope>PROTEIN SEQUENCE</scope>
    <scope>SUBCELLULAR LOCATION</scope>
</reference>